<organism>
    <name type="scientific">Klebsiella pneumoniae</name>
    <dbReference type="NCBI Taxonomy" id="573"/>
    <lineage>
        <taxon>Bacteria</taxon>
        <taxon>Pseudomonadati</taxon>
        <taxon>Pseudomonadota</taxon>
        <taxon>Gammaproteobacteria</taxon>
        <taxon>Enterobacterales</taxon>
        <taxon>Enterobacteriaceae</taxon>
        <taxon>Klebsiella/Raoultella group</taxon>
        <taxon>Klebsiella</taxon>
        <taxon>Klebsiella pneumoniae complex</taxon>
    </lineage>
</organism>
<name>MANC_KLEPN</name>
<protein>
    <recommendedName>
        <fullName>Mannose-1-phosphate guanylyltransferase</fullName>
        <ecNumber>2.7.7.13</ecNumber>
    </recommendedName>
    <alternativeName>
        <fullName>GDP-mannose pyrophosphorylase</fullName>
        <shortName>GMP</shortName>
        <shortName>GMPP</shortName>
    </alternativeName>
    <alternativeName>
        <fullName>ORF16</fullName>
    </alternativeName>
</protein>
<sequence length="471" mass="52864">MLLPVIMAGGTGSRLWPMSRELYPKQFLRLFGQNSMLQETITRLSGLEIHEPMVICNEEHRFLVAEQLRQLNKLSNNIILEPVGRNTAPAIALAALQATRHGDDPLMLVLAADHIINNQPVFHDAIRVAEQYADEGHLVTFGIVPNAPETGYGYIQRGVALTDSAHTPYQVARFVEKPDRERAEAYLASGEYYWNSGMFMFRAKKYLSELAKFRPDILEACQAAVNAADNGSDFISIPHDIFCECPDESVDYAVMEKTADAVVVGLDADWSDVGSWSALWEVSPKDEQGNVLSGDAWVHNSENCYINSDEKLVAAIGVENLVIVSTKDAVLVMNRERSQDVKKAVEFLKQNQRSEYKRHREIYRPWGRCDVVVQTPRFNVNRITVKPGGAFSMQMHHHRAEHWVILAGTGQVTVNGKQFLLTENQSTFIPIGAEHSLENPGRIPLEVLEIQSGSYLGEDDIIRIKDQYGRC</sequence>
<keyword id="KW-0972">Capsule biogenesis/degradation</keyword>
<keyword id="KW-0342">GTP-binding</keyword>
<keyword id="KW-0448">Lipopolysaccharide biosynthesis</keyword>
<keyword id="KW-0547">Nucleotide-binding</keyword>
<keyword id="KW-0548">Nucleotidyltransferase</keyword>
<keyword id="KW-0808">Transferase</keyword>
<gene>
    <name type="primary">manC</name>
    <name type="synonym">cpsB</name>
</gene>
<dbReference type="EC" id="2.7.7.13"/>
<dbReference type="EMBL" id="D21242">
    <property type="protein sequence ID" value="BAA04787.1"/>
    <property type="molecule type" value="Genomic_DNA"/>
</dbReference>
<dbReference type="PIR" id="E56146">
    <property type="entry name" value="E56146"/>
</dbReference>
<dbReference type="RefSeq" id="WP_004180506.1">
    <property type="nucleotide sequence ID" value="NZ_WXZY01000015.1"/>
</dbReference>
<dbReference type="SMR" id="Q48462"/>
<dbReference type="UniPathway" id="UPA00126">
    <property type="reaction ID" value="UER00930"/>
</dbReference>
<dbReference type="GO" id="GO:0005525">
    <property type="term" value="F:GTP binding"/>
    <property type="evidence" value="ECO:0007669"/>
    <property type="project" value="UniProtKB-KW"/>
</dbReference>
<dbReference type="GO" id="GO:0004475">
    <property type="term" value="F:mannose-1-phosphate guanylyltransferase (GTP) activity"/>
    <property type="evidence" value="ECO:0007669"/>
    <property type="project" value="UniProtKB-EC"/>
</dbReference>
<dbReference type="GO" id="GO:0009298">
    <property type="term" value="P:GDP-mannose biosynthetic process"/>
    <property type="evidence" value="ECO:0007669"/>
    <property type="project" value="UniProtKB-UniPathway"/>
</dbReference>
<dbReference type="GO" id="GO:0009103">
    <property type="term" value="P:lipopolysaccharide biosynthetic process"/>
    <property type="evidence" value="ECO:0007669"/>
    <property type="project" value="UniProtKB-KW"/>
</dbReference>
<dbReference type="CDD" id="cd02213">
    <property type="entry name" value="cupin_PMI_typeII_C"/>
    <property type="match status" value="1"/>
</dbReference>
<dbReference type="CDD" id="cd02509">
    <property type="entry name" value="GDP-M1P_Guanylyltransferase"/>
    <property type="match status" value="1"/>
</dbReference>
<dbReference type="FunFam" id="3.90.550.10:FF:000046">
    <property type="entry name" value="Mannose-1-phosphate guanylyltransferase (GDP)"/>
    <property type="match status" value="1"/>
</dbReference>
<dbReference type="FunFam" id="2.60.120.10:FF:000032">
    <property type="entry name" value="Mannose-1-phosphate guanylyltransferase/mannose-6-phosphate isomerase"/>
    <property type="match status" value="1"/>
</dbReference>
<dbReference type="Gene3D" id="2.60.120.10">
    <property type="entry name" value="Jelly Rolls"/>
    <property type="match status" value="1"/>
</dbReference>
<dbReference type="Gene3D" id="3.90.550.10">
    <property type="entry name" value="Spore Coat Polysaccharide Biosynthesis Protein SpsA, Chain A"/>
    <property type="match status" value="1"/>
</dbReference>
<dbReference type="InterPro" id="IPR049577">
    <property type="entry name" value="GMPP_N"/>
</dbReference>
<dbReference type="InterPro" id="IPR006375">
    <property type="entry name" value="Man1P_GuaTrfase/Man6P_Isoase"/>
</dbReference>
<dbReference type="InterPro" id="IPR001538">
    <property type="entry name" value="Man6P_isomerase-2_C"/>
</dbReference>
<dbReference type="InterPro" id="IPR054566">
    <property type="entry name" value="ManC/GMP-like_b-helix"/>
</dbReference>
<dbReference type="InterPro" id="IPR051161">
    <property type="entry name" value="Mannose-6P_isomerase_type2"/>
</dbReference>
<dbReference type="InterPro" id="IPR005835">
    <property type="entry name" value="NTP_transferase_dom"/>
</dbReference>
<dbReference type="InterPro" id="IPR029044">
    <property type="entry name" value="Nucleotide-diphossugar_trans"/>
</dbReference>
<dbReference type="InterPro" id="IPR014710">
    <property type="entry name" value="RmlC-like_jellyroll"/>
</dbReference>
<dbReference type="InterPro" id="IPR011051">
    <property type="entry name" value="RmlC_Cupin_sf"/>
</dbReference>
<dbReference type="NCBIfam" id="TIGR01479">
    <property type="entry name" value="GMP_PMI"/>
    <property type="match status" value="1"/>
</dbReference>
<dbReference type="PANTHER" id="PTHR46390">
    <property type="entry name" value="MANNOSE-1-PHOSPHATE GUANYLYLTRANSFERASE"/>
    <property type="match status" value="1"/>
</dbReference>
<dbReference type="PANTHER" id="PTHR46390:SF1">
    <property type="entry name" value="MANNOSE-1-PHOSPHATE GUANYLYLTRANSFERASE"/>
    <property type="match status" value="1"/>
</dbReference>
<dbReference type="Pfam" id="PF22640">
    <property type="entry name" value="ManC_GMP_beta-helix"/>
    <property type="match status" value="1"/>
</dbReference>
<dbReference type="Pfam" id="PF01050">
    <property type="entry name" value="MannoseP_isomer"/>
    <property type="match status" value="1"/>
</dbReference>
<dbReference type="Pfam" id="PF00483">
    <property type="entry name" value="NTP_transferase"/>
    <property type="match status" value="1"/>
</dbReference>
<dbReference type="SUPFAM" id="SSF53448">
    <property type="entry name" value="Nucleotide-diphospho-sugar transferases"/>
    <property type="match status" value="1"/>
</dbReference>
<dbReference type="SUPFAM" id="SSF51182">
    <property type="entry name" value="RmlC-like cupins"/>
    <property type="match status" value="1"/>
</dbReference>
<evidence type="ECO:0000305" key="1"/>
<feature type="chain" id="PRO_0000194255" description="Mannose-1-phosphate guanylyltransferase">
    <location>
        <begin position="1"/>
        <end position="471"/>
    </location>
</feature>
<proteinExistence type="inferred from homology"/>
<comment type="function">
    <text>Involved in the biosynthesis of the K2 capsular polysaccharide biosynthesis.</text>
</comment>
<comment type="catalytic activity">
    <reaction>
        <text>alpha-D-mannose 1-phosphate + GTP + H(+) = GDP-alpha-D-mannose + diphosphate</text>
        <dbReference type="Rhea" id="RHEA:15229"/>
        <dbReference type="ChEBI" id="CHEBI:15378"/>
        <dbReference type="ChEBI" id="CHEBI:33019"/>
        <dbReference type="ChEBI" id="CHEBI:37565"/>
        <dbReference type="ChEBI" id="CHEBI:57527"/>
        <dbReference type="ChEBI" id="CHEBI:58409"/>
        <dbReference type="EC" id="2.7.7.13"/>
    </reaction>
</comment>
<comment type="pathway">
    <text>Nucleotide-sugar biosynthesis; GDP-alpha-D-mannose biosynthesis; GDP-alpha-D-mannose from alpha-D-mannose 1-phosphate (GTP route): step 1/1.</text>
</comment>
<comment type="similarity">
    <text evidence="1">Belongs to the mannose-6-phosphate isomerase type 2 family.</text>
</comment>
<reference key="1">
    <citation type="journal article" date="1995" name="J. Bacteriol.">
        <title>Genomic organization of the Klebsiella pneumoniae cps region responsible for serotype K2 capsular polysaccharide synthesis in the virulent strain Chedid.</title>
        <authorList>
            <person name="Arakawa Y."/>
            <person name="Wacharotayankun R."/>
            <person name="Nagatsuka T."/>
            <person name="Ito H."/>
            <person name="Kato N."/>
            <person name="Ohta M."/>
        </authorList>
    </citation>
    <scope>NUCLEOTIDE SEQUENCE [GENOMIC DNA]</scope>
    <source>
        <strain>Chedid</strain>
    </source>
</reference>
<accession>Q48462</accession>